<proteinExistence type="inferred from homology"/>
<protein>
    <recommendedName>
        <fullName>Elongation factor G 1</fullName>
        <shortName>EF-G 1</shortName>
    </recommendedName>
</protein>
<dbReference type="EMBL" id="AF021260">
    <property type="protein sequence ID" value="AAB71893.1"/>
    <property type="molecule type" value="Genomic_DNA"/>
</dbReference>
<dbReference type="EMBL" id="AE000783">
    <property type="protein sequence ID" value="AAC66897.1"/>
    <property type="molecule type" value="Genomic_DNA"/>
</dbReference>
<dbReference type="PIR" id="C70167">
    <property type="entry name" value="C70167"/>
</dbReference>
<dbReference type="RefSeq" id="NP_212674.1">
    <property type="nucleotide sequence ID" value="NC_001318.1"/>
</dbReference>
<dbReference type="RefSeq" id="WP_002557127.1">
    <property type="nucleotide sequence ID" value="NC_001318.1"/>
</dbReference>
<dbReference type="SMR" id="O30913"/>
<dbReference type="STRING" id="224326.BB_0540"/>
<dbReference type="PaxDb" id="224326-BB_0540"/>
<dbReference type="EnsemblBacteria" id="AAC66897">
    <property type="protein sequence ID" value="AAC66897"/>
    <property type="gene ID" value="BB_0540"/>
</dbReference>
<dbReference type="KEGG" id="bbu:BB_0540"/>
<dbReference type="PATRIC" id="fig|224326.49.peg.931"/>
<dbReference type="HOGENOM" id="CLU_002794_4_1_12"/>
<dbReference type="OrthoDB" id="9804431at2"/>
<dbReference type="Proteomes" id="UP000001807">
    <property type="component" value="Chromosome"/>
</dbReference>
<dbReference type="GO" id="GO:0005829">
    <property type="term" value="C:cytosol"/>
    <property type="evidence" value="ECO:0000314"/>
    <property type="project" value="CAFA"/>
</dbReference>
<dbReference type="GO" id="GO:0005525">
    <property type="term" value="F:GTP binding"/>
    <property type="evidence" value="ECO:0007669"/>
    <property type="project" value="UniProtKB-UniRule"/>
</dbReference>
<dbReference type="GO" id="GO:0003924">
    <property type="term" value="F:GTPase activity"/>
    <property type="evidence" value="ECO:0007669"/>
    <property type="project" value="InterPro"/>
</dbReference>
<dbReference type="GO" id="GO:0003746">
    <property type="term" value="F:translation elongation factor activity"/>
    <property type="evidence" value="ECO:0007669"/>
    <property type="project" value="UniProtKB-UniRule"/>
</dbReference>
<dbReference type="CDD" id="cd01886">
    <property type="entry name" value="EF-G"/>
    <property type="match status" value="1"/>
</dbReference>
<dbReference type="CDD" id="cd16262">
    <property type="entry name" value="EFG_III"/>
    <property type="match status" value="1"/>
</dbReference>
<dbReference type="CDD" id="cd01434">
    <property type="entry name" value="EFG_mtEFG1_IV"/>
    <property type="match status" value="1"/>
</dbReference>
<dbReference type="CDD" id="cd04091">
    <property type="entry name" value="mtEFG1_II_like"/>
    <property type="match status" value="1"/>
</dbReference>
<dbReference type="FunFam" id="3.30.230.10:FF:000003">
    <property type="entry name" value="Elongation factor G"/>
    <property type="match status" value="1"/>
</dbReference>
<dbReference type="FunFam" id="3.30.70.240:FF:000001">
    <property type="entry name" value="Elongation factor G"/>
    <property type="match status" value="1"/>
</dbReference>
<dbReference type="FunFam" id="3.30.70.870:FF:000001">
    <property type="entry name" value="Elongation factor G"/>
    <property type="match status" value="1"/>
</dbReference>
<dbReference type="FunFam" id="3.40.50.300:FF:000029">
    <property type="entry name" value="Elongation factor G"/>
    <property type="match status" value="1"/>
</dbReference>
<dbReference type="FunFam" id="2.40.30.10:FF:000022">
    <property type="entry name" value="Elongation factor G, mitochondrial"/>
    <property type="match status" value="1"/>
</dbReference>
<dbReference type="Gene3D" id="3.30.230.10">
    <property type="match status" value="1"/>
</dbReference>
<dbReference type="Gene3D" id="3.30.70.240">
    <property type="match status" value="1"/>
</dbReference>
<dbReference type="Gene3D" id="3.30.70.870">
    <property type="entry name" value="Elongation Factor G (Translational Gtpase), domain 3"/>
    <property type="match status" value="1"/>
</dbReference>
<dbReference type="Gene3D" id="3.40.50.300">
    <property type="entry name" value="P-loop containing nucleotide triphosphate hydrolases"/>
    <property type="match status" value="1"/>
</dbReference>
<dbReference type="Gene3D" id="2.40.30.10">
    <property type="entry name" value="Translation factors"/>
    <property type="match status" value="1"/>
</dbReference>
<dbReference type="HAMAP" id="MF_00054_B">
    <property type="entry name" value="EF_G_EF_2_B"/>
    <property type="match status" value="1"/>
</dbReference>
<dbReference type="InterPro" id="IPR041095">
    <property type="entry name" value="EFG_II"/>
</dbReference>
<dbReference type="InterPro" id="IPR009022">
    <property type="entry name" value="EFG_III"/>
</dbReference>
<dbReference type="InterPro" id="IPR035647">
    <property type="entry name" value="EFG_III/V"/>
</dbReference>
<dbReference type="InterPro" id="IPR047872">
    <property type="entry name" value="EFG_IV"/>
</dbReference>
<dbReference type="InterPro" id="IPR000640">
    <property type="entry name" value="EFG_V-like"/>
</dbReference>
<dbReference type="InterPro" id="IPR004161">
    <property type="entry name" value="EFTu-like_2"/>
</dbReference>
<dbReference type="InterPro" id="IPR031157">
    <property type="entry name" value="G_TR_CS"/>
</dbReference>
<dbReference type="InterPro" id="IPR027417">
    <property type="entry name" value="P-loop_NTPase"/>
</dbReference>
<dbReference type="InterPro" id="IPR020568">
    <property type="entry name" value="Ribosomal_Su5_D2-typ_SF"/>
</dbReference>
<dbReference type="InterPro" id="IPR014721">
    <property type="entry name" value="Ribsml_uS5_D2-typ_fold_subgr"/>
</dbReference>
<dbReference type="InterPro" id="IPR005225">
    <property type="entry name" value="Small_GTP-bd"/>
</dbReference>
<dbReference type="InterPro" id="IPR000795">
    <property type="entry name" value="T_Tr_GTP-bd_dom"/>
</dbReference>
<dbReference type="InterPro" id="IPR009000">
    <property type="entry name" value="Transl_B-barrel_sf"/>
</dbReference>
<dbReference type="InterPro" id="IPR004540">
    <property type="entry name" value="Transl_elong_EFG/EF2"/>
</dbReference>
<dbReference type="InterPro" id="IPR005517">
    <property type="entry name" value="Transl_elong_EFG/EF2_IV"/>
</dbReference>
<dbReference type="NCBIfam" id="TIGR00484">
    <property type="entry name" value="EF-G"/>
    <property type="match status" value="1"/>
</dbReference>
<dbReference type="NCBIfam" id="NF009381">
    <property type="entry name" value="PRK12740.1-5"/>
    <property type="match status" value="1"/>
</dbReference>
<dbReference type="NCBIfam" id="TIGR00231">
    <property type="entry name" value="small_GTP"/>
    <property type="match status" value="1"/>
</dbReference>
<dbReference type="PANTHER" id="PTHR43636">
    <property type="entry name" value="ELONGATION FACTOR G, MITOCHONDRIAL"/>
    <property type="match status" value="1"/>
</dbReference>
<dbReference type="PANTHER" id="PTHR43636:SF2">
    <property type="entry name" value="ELONGATION FACTOR G, MITOCHONDRIAL"/>
    <property type="match status" value="1"/>
</dbReference>
<dbReference type="Pfam" id="PF00679">
    <property type="entry name" value="EFG_C"/>
    <property type="match status" value="1"/>
</dbReference>
<dbReference type="Pfam" id="PF14492">
    <property type="entry name" value="EFG_III"/>
    <property type="match status" value="1"/>
</dbReference>
<dbReference type="Pfam" id="PF03764">
    <property type="entry name" value="EFG_IV"/>
    <property type="match status" value="1"/>
</dbReference>
<dbReference type="Pfam" id="PF00009">
    <property type="entry name" value="GTP_EFTU"/>
    <property type="match status" value="1"/>
</dbReference>
<dbReference type="Pfam" id="PF03144">
    <property type="entry name" value="GTP_EFTU_D2"/>
    <property type="match status" value="1"/>
</dbReference>
<dbReference type="PRINTS" id="PR00315">
    <property type="entry name" value="ELONGATNFCT"/>
</dbReference>
<dbReference type="SMART" id="SM00838">
    <property type="entry name" value="EFG_C"/>
    <property type="match status" value="1"/>
</dbReference>
<dbReference type="SMART" id="SM00889">
    <property type="entry name" value="EFG_IV"/>
    <property type="match status" value="1"/>
</dbReference>
<dbReference type="SUPFAM" id="SSF54980">
    <property type="entry name" value="EF-G C-terminal domain-like"/>
    <property type="match status" value="2"/>
</dbReference>
<dbReference type="SUPFAM" id="SSF52540">
    <property type="entry name" value="P-loop containing nucleoside triphosphate hydrolases"/>
    <property type="match status" value="1"/>
</dbReference>
<dbReference type="SUPFAM" id="SSF54211">
    <property type="entry name" value="Ribosomal protein S5 domain 2-like"/>
    <property type="match status" value="1"/>
</dbReference>
<dbReference type="SUPFAM" id="SSF50447">
    <property type="entry name" value="Translation proteins"/>
    <property type="match status" value="1"/>
</dbReference>
<dbReference type="PROSITE" id="PS00301">
    <property type="entry name" value="G_TR_1"/>
    <property type="match status" value="1"/>
</dbReference>
<dbReference type="PROSITE" id="PS51722">
    <property type="entry name" value="G_TR_2"/>
    <property type="match status" value="1"/>
</dbReference>
<comment type="function">
    <text evidence="1">Catalyzes the GTP-dependent ribosomal translocation step during translation elongation. During this step, the ribosome changes from the pre-translocational (PRE) to the post-translocational (POST) state as the newly formed A-site-bound peptidyl-tRNA and P-site-bound deacylated tRNA move to the P and E sites, respectively. Catalyzes the coordinated movement of the two tRNA molecules, the mRNA and conformational changes in the ribosome (By similarity).</text>
</comment>
<comment type="subcellular location">
    <subcellularLocation>
        <location evidence="1">Cytoplasm</location>
    </subcellularLocation>
</comment>
<comment type="similarity">
    <text evidence="2">Belongs to the TRAFAC class translation factor GTPase superfamily. Classic translation factor GTPase family. EF-G/EF-2 subfamily.</text>
</comment>
<sequence>MDYNKLRNIGISAHIDSGKTTLTERILFYCNKIHAIHEVKGKDGVGATMDSMELERERGITIASAATHVEWKDFPINIIDTPGHVDFTIEVERSLRVLDGAILVLDSVAGVQSQSITVDRQLKRYSVPRLAFVNKCDKTGANPYNVKDQLRSKLDLNSVLMQIPIGLEDKHIGVIDLVLMKAYYFEGKDGTEIIEKEIPSDLLEEAKSKREIMLDTLADFNDELMELHMEGKEVPTEIIYNATRTGTLALKLCPVFMGSAYKNKGVQLLLDAVTRFLPSPHDIKNTALDLNNNEKEIDLKIDNELPTVALAFKLEDGQYGQLTYVRIYQGILKKGQELINSRTSKKFKVGRLIRMHANNTEDIEFGGSGDIVALFGIECASGDTFCDPSINYSMTSMFIPDPVISLSVKPKDKKSADNMAKALGRFTKEDPTFKTYVDIESNETIIQGMGELHLEVYIERMKREFKAEVETGMPQVAYRETITRKAEFNYTHKKQSGGAGQFGRVAGFMEPLDKEGETYEFVNLIKGGVIPTEYIPSCDKGFQKAMERGTLIGFPIVDIKITINDGQYHIVDSSDIAFQLAAIGAFREAYEKAKPTILEPIMKVTLEGPTEFQGNMFGLLNQRRGIITGSLEDGSFSKVEAEVPLSEMFGFSTVLRSSTQGKAEFSMEFLRYGKVPSTIFDELRKKFNDQNKS</sequence>
<reference key="1">
    <citation type="submission" date="1997-10" db="EMBL/GenBank/DDBJ databases">
        <title>Putative sequence for Borrelia burgdorferi elongation factor G (EF-G) gene.</title>
        <authorList>
            <person name="Sonderbye L."/>
            <person name="Hindersson P."/>
            <person name="Pedersen S."/>
        </authorList>
    </citation>
    <scope>NUCLEOTIDE SEQUENCE [GENOMIC DNA]</scope>
    <source>
        <strain>DK1</strain>
    </source>
</reference>
<reference key="2">
    <citation type="journal article" date="1997" name="Nature">
        <title>Genomic sequence of a Lyme disease spirochaete, Borrelia burgdorferi.</title>
        <authorList>
            <person name="Fraser C.M."/>
            <person name="Casjens S."/>
            <person name="Huang W.M."/>
            <person name="Sutton G.G."/>
            <person name="Clayton R.A."/>
            <person name="Lathigra R."/>
            <person name="White O."/>
            <person name="Ketchum K.A."/>
            <person name="Dodson R.J."/>
            <person name="Hickey E.K."/>
            <person name="Gwinn M.L."/>
            <person name="Dougherty B.A."/>
            <person name="Tomb J.-F."/>
            <person name="Fleischmann R.D."/>
            <person name="Richardson D.L."/>
            <person name="Peterson J.D."/>
            <person name="Kerlavage A.R."/>
            <person name="Quackenbush J."/>
            <person name="Salzberg S.L."/>
            <person name="Hanson M."/>
            <person name="van Vugt R."/>
            <person name="Palmer N."/>
            <person name="Adams M.D."/>
            <person name="Gocayne J.D."/>
            <person name="Weidman J.F."/>
            <person name="Utterback T.R."/>
            <person name="Watthey L."/>
            <person name="McDonald L.A."/>
            <person name="Artiach P."/>
            <person name="Bowman C."/>
            <person name="Garland S.A."/>
            <person name="Fujii C."/>
            <person name="Cotton M.D."/>
            <person name="Horst K."/>
            <person name="Roberts K.M."/>
            <person name="Hatch B."/>
            <person name="Smith H.O."/>
            <person name="Venter J.C."/>
        </authorList>
    </citation>
    <scope>NUCLEOTIDE SEQUENCE [LARGE SCALE GENOMIC DNA]</scope>
    <source>
        <strain>ATCC 35210 / DSM 4680 / CIP 102532 / B31</strain>
    </source>
</reference>
<accession>O30913</accession>
<accession>O51490</accession>
<gene>
    <name type="primary">fusA</name>
    <name type="synonym">fus1</name>
    <name type="ordered locus">BB_0540</name>
</gene>
<keyword id="KW-0963">Cytoplasm</keyword>
<keyword id="KW-0251">Elongation factor</keyword>
<keyword id="KW-0342">GTP-binding</keyword>
<keyword id="KW-0547">Nucleotide-binding</keyword>
<keyword id="KW-0648">Protein biosynthesis</keyword>
<keyword id="KW-1185">Reference proteome</keyword>
<evidence type="ECO:0000250" key="1"/>
<evidence type="ECO:0000305" key="2"/>
<name>EFG1_BORBU</name>
<organism>
    <name type="scientific">Borreliella burgdorferi (strain ATCC 35210 / DSM 4680 / CIP 102532 / B31)</name>
    <name type="common">Borrelia burgdorferi</name>
    <dbReference type="NCBI Taxonomy" id="224326"/>
    <lineage>
        <taxon>Bacteria</taxon>
        <taxon>Pseudomonadati</taxon>
        <taxon>Spirochaetota</taxon>
        <taxon>Spirochaetia</taxon>
        <taxon>Spirochaetales</taxon>
        <taxon>Borreliaceae</taxon>
        <taxon>Borreliella</taxon>
    </lineage>
</organism>
<feature type="chain" id="PRO_0000091080" description="Elongation factor G 1">
    <location>
        <begin position="1"/>
        <end position="693"/>
    </location>
</feature>
<feature type="domain" description="tr-type G">
    <location>
        <begin position="4"/>
        <end position="281"/>
    </location>
</feature>
<feature type="binding site" evidence="1">
    <location>
        <begin position="13"/>
        <end position="20"/>
    </location>
    <ligand>
        <name>GTP</name>
        <dbReference type="ChEBI" id="CHEBI:37565"/>
    </ligand>
</feature>
<feature type="binding site" evidence="1">
    <location>
        <begin position="80"/>
        <end position="84"/>
    </location>
    <ligand>
        <name>GTP</name>
        <dbReference type="ChEBI" id="CHEBI:37565"/>
    </ligand>
</feature>
<feature type="binding site" evidence="1">
    <location>
        <begin position="134"/>
        <end position="137"/>
    </location>
    <ligand>
        <name>GTP</name>
        <dbReference type="ChEBI" id="CHEBI:37565"/>
    </ligand>
</feature>
<feature type="sequence conflict" description="In Ref. 1; AAB71893." evidence="2" ref="1">
    <original>D</original>
    <variation>E</variation>
    <location>
        <position position="201"/>
    </location>
</feature>
<feature type="sequence conflict" description="In Ref. 1; AAB71893." evidence="2" ref="1">
    <original>S</original>
    <variation>N</variation>
    <location>
        <position position="208"/>
    </location>
</feature>
<feature type="sequence conflict" description="In Ref. 1; AAB71893." evidence="2" ref="1">
    <original>I</original>
    <variation>M</variation>
    <location>
        <position position="212"/>
    </location>
</feature>
<feature type="sequence conflict" description="In Ref. 1; AAB71893." evidence="2" ref="1">
    <original>T</original>
    <variation>A</variation>
    <location>
        <position position="216"/>
    </location>
</feature>
<feature type="sequence conflict" description="In Ref. 1; AAB71893." evidence="2" ref="1">
    <original>T</original>
    <variation>I</variation>
    <location>
        <position position="236"/>
    </location>
</feature>
<feature type="sequence conflict" description="In Ref. 1; AAB71893." evidence="2" ref="1">
    <original>T</original>
    <variation>I</variation>
    <location>
        <position position="243"/>
    </location>
</feature>
<feature type="sequence conflict" description="In Ref. 1; AAB71893." evidence="2" ref="1">
    <original>E</original>
    <variation>S</variation>
    <location>
        <position position="304"/>
    </location>
</feature>
<feature type="sequence conflict" description="In Ref. 1; AAB71893." evidence="2" ref="1">
    <original>I</original>
    <variation>T</variation>
    <location>
        <position position="331"/>
    </location>
</feature>
<feature type="sequence conflict" description="In Ref. 1; AAB71893." evidence="2" ref="1">
    <original>R</original>
    <variation>G</variation>
    <location>
        <position position="484"/>
    </location>
</feature>
<feature type="sequence conflict" description="In Ref. 1; AAB71893." evidence="2" ref="1">
    <original>R</original>
    <variation>A</variation>
    <location>
        <position position="504"/>
    </location>
</feature>
<feature type="sequence conflict" description="In Ref. 1; AAB71893." evidence="2" ref="1">
    <original>D</original>
    <variation>N</variation>
    <location>
        <position position="513"/>
    </location>
</feature>
<feature type="sequence conflict" description="In Ref. 1; AAB71893." evidence="2" ref="1">
    <original>R</original>
    <variation>K</variation>
    <location>
        <position position="548"/>
    </location>
</feature>
<feature type="sequence conflict" description="In Ref. 1; AAB71893." evidence="2" ref="1">
    <original>R</original>
    <variation>K</variation>
    <location>
        <position position="671"/>
    </location>
</feature>
<feature type="sequence conflict" description="In Ref. 1; AAB71893." evidence="2" ref="1">
    <original>T</original>
    <variation>A</variation>
    <location>
        <position position="678"/>
    </location>
</feature>
<feature type="sequence conflict" description="In Ref. 1; AAB71893." evidence="2" ref="1">
    <original>D</original>
    <variation>R</variation>
    <location>
        <position position="689"/>
    </location>
</feature>